<protein>
    <recommendedName>
        <fullName evidence="1">ATP-dependent protease subunit HslV</fullName>
        <ecNumber evidence="1">3.4.25.2</ecNumber>
    </recommendedName>
</protein>
<sequence length="174" mass="18752">MTTIVSVRREGKVVVAGDGQASQGDMIAKGNVKKVRRLYNDSVLVGFAGSTADAFILFDLCERKLEMHQGNLTKAAVELAKEWRSDRALRRLEAMLIVADKTTSLIISGTGDLINADNDLLTIGSGGYFARSAATALLENTDLDAREIATKALTIAGDIDVYTNHNHTVEELNA</sequence>
<accession>B5FBL7</accession>
<name>HSLV_ALIFM</name>
<gene>
    <name evidence="1" type="primary">hslV</name>
    <name type="ordered locus">VFMJ11_2389</name>
</gene>
<proteinExistence type="inferred from homology"/>
<keyword id="KW-0021">Allosteric enzyme</keyword>
<keyword id="KW-0963">Cytoplasm</keyword>
<keyword id="KW-0378">Hydrolase</keyword>
<keyword id="KW-0479">Metal-binding</keyword>
<keyword id="KW-0645">Protease</keyword>
<keyword id="KW-0915">Sodium</keyword>
<keyword id="KW-0346">Stress response</keyword>
<keyword id="KW-0888">Threonine protease</keyword>
<feature type="chain" id="PRO_1000100925" description="ATP-dependent protease subunit HslV">
    <location>
        <begin position="1"/>
        <end position="174"/>
    </location>
</feature>
<feature type="active site" evidence="1">
    <location>
        <position position="2"/>
    </location>
</feature>
<feature type="binding site" evidence="1">
    <location>
        <position position="157"/>
    </location>
    <ligand>
        <name>Na(+)</name>
        <dbReference type="ChEBI" id="CHEBI:29101"/>
    </ligand>
</feature>
<feature type="binding site" evidence="1">
    <location>
        <position position="160"/>
    </location>
    <ligand>
        <name>Na(+)</name>
        <dbReference type="ChEBI" id="CHEBI:29101"/>
    </ligand>
</feature>
<feature type="binding site" evidence="1">
    <location>
        <position position="163"/>
    </location>
    <ligand>
        <name>Na(+)</name>
        <dbReference type="ChEBI" id="CHEBI:29101"/>
    </ligand>
</feature>
<dbReference type="EC" id="3.4.25.2" evidence="1"/>
<dbReference type="EMBL" id="CP001139">
    <property type="protein sequence ID" value="ACH66026.1"/>
    <property type="molecule type" value="Genomic_DNA"/>
</dbReference>
<dbReference type="RefSeq" id="WP_005421069.1">
    <property type="nucleotide sequence ID" value="NC_011184.1"/>
</dbReference>
<dbReference type="SMR" id="B5FBL7"/>
<dbReference type="MEROPS" id="T01.007"/>
<dbReference type="GeneID" id="56276738"/>
<dbReference type="KEGG" id="vfm:VFMJ11_2389"/>
<dbReference type="HOGENOM" id="CLU_093872_1_0_6"/>
<dbReference type="Proteomes" id="UP000001857">
    <property type="component" value="Chromosome I"/>
</dbReference>
<dbReference type="GO" id="GO:0009376">
    <property type="term" value="C:HslUV protease complex"/>
    <property type="evidence" value="ECO:0007669"/>
    <property type="project" value="UniProtKB-UniRule"/>
</dbReference>
<dbReference type="GO" id="GO:0005839">
    <property type="term" value="C:proteasome core complex"/>
    <property type="evidence" value="ECO:0007669"/>
    <property type="project" value="InterPro"/>
</dbReference>
<dbReference type="GO" id="GO:0046872">
    <property type="term" value="F:metal ion binding"/>
    <property type="evidence" value="ECO:0007669"/>
    <property type="project" value="UniProtKB-KW"/>
</dbReference>
<dbReference type="GO" id="GO:0004298">
    <property type="term" value="F:threonine-type endopeptidase activity"/>
    <property type="evidence" value="ECO:0007669"/>
    <property type="project" value="UniProtKB-KW"/>
</dbReference>
<dbReference type="GO" id="GO:0051603">
    <property type="term" value="P:proteolysis involved in protein catabolic process"/>
    <property type="evidence" value="ECO:0007669"/>
    <property type="project" value="InterPro"/>
</dbReference>
<dbReference type="CDD" id="cd01913">
    <property type="entry name" value="protease_HslV"/>
    <property type="match status" value="1"/>
</dbReference>
<dbReference type="FunFam" id="3.60.20.10:FF:000002">
    <property type="entry name" value="ATP-dependent protease subunit HslV"/>
    <property type="match status" value="1"/>
</dbReference>
<dbReference type="Gene3D" id="3.60.20.10">
    <property type="entry name" value="Glutamine Phosphoribosylpyrophosphate, subunit 1, domain 1"/>
    <property type="match status" value="1"/>
</dbReference>
<dbReference type="HAMAP" id="MF_00248">
    <property type="entry name" value="HslV"/>
    <property type="match status" value="1"/>
</dbReference>
<dbReference type="InterPro" id="IPR022281">
    <property type="entry name" value="ATP-dep_Prtase_HsIV_su"/>
</dbReference>
<dbReference type="InterPro" id="IPR029055">
    <property type="entry name" value="Ntn_hydrolases_N"/>
</dbReference>
<dbReference type="InterPro" id="IPR001353">
    <property type="entry name" value="Proteasome_sua/b"/>
</dbReference>
<dbReference type="InterPro" id="IPR023333">
    <property type="entry name" value="Proteasome_suB-type"/>
</dbReference>
<dbReference type="NCBIfam" id="TIGR03692">
    <property type="entry name" value="ATP_dep_HslV"/>
    <property type="match status" value="1"/>
</dbReference>
<dbReference type="NCBIfam" id="NF003964">
    <property type="entry name" value="PRK05456.1"/>
    <property type="match status" value="1"/>
</dbReference>
<dbReference type="PANTHER" id="PTHR32194:SF0">
    <property type="entry name" value="ATP-DEPENDENT PROTEASE SUBUNIT HSLV"/>
    <property type="match status" value="1"/>
</dbReference>
<dbReference type="PANTHER" id="PTHR32194">
    <property type="entry name" value="METALLOPROTEASE TLDD"/>
    <property type="match status" value="1"/>
</dbReference>
<dbReference type="Pfam" id="PF00227">
    <property type="entry name" value="Proteasome"/>
    <property type="match status" value="1"/>
</dbReference>
<dbReference type="PIRSF" id="PIRSF039093">
    <property type="entry name" value="HslV"/>
    <property type="match status" value="1"/>
</dbReference>
<dbReference type="SUPFAM" id="SSF56235">
    <property type="entry name" value="N-terminal nucleophile aminohydrolases (Ntn hydrolases)"/>
    <property type="match status" value="1"/>
</dbReference>
<dbReference type="PROSITE" id="PS51476">
    <property type="entry name" value="PROTEASOME_BETA_2"/>
    <property type="match status" value="1"/>
</dbReference>
<evidence type="ECO:0000255" key="1">
    <source>
        <dbReference type="HAMAP-Rule" id="MF_00248"/>
    </source>
</evidence>
<reference key="1">
    <citation type="submission" date="2008-08" db="EMBL/GenBank/DDBJ databases">
        <title>Complete sequence of Vibrio fischeri strain MJ11.</title>
        <authorList>
            <person name="Mandel M.J."/>
            <person name="Stabb E.V."/>
            <person name="Ruby E.G."/>
            <person name="Ferriera S."/>
            <person name="Johnson J."/>
            <person name="Kravitz S."/>
            <person name="Beeson K."/>
            <person name="Sutton G."/>
            <person name="Rogers Y.-H."/>
            <person name="Friedman R."/>
            <person name="Frazier M."/>
            <person name="Venter J.C."/>
        </authorList>
    </citation>
    <scope>NUCLEOTIDE SEQUENCE [LARGE SCALE GENOMIC DNA]</scope>
    <source>
        <strain>MJ11</strain>
    </source>
</reference>
<organism>
    <name type="scientific">Aliivibrio fischeri (strain MJ11)</name>
    <name type="common">Vibrio fischeri</name>
    <dbReference type="NCBI Taxonomy" id="388396"/>
    <lineage>
        <taxon>Bacteria</taxon>
        <taxon>Pseudomonadati</taxon>
        <taxon>Pseudomonadota</taxon>
        <taxon>Gammaproteobacteria</taxon>
        <taxon>Vibrionales</taxon>
        <taxon>Vibrionaceae</taxon>
        <taxon>Aliivibrio</taxon>
    </lineage>
</organism>
<comment type="function">
    <text evidence="1">Protease subunit of a proteasome-like degradation complex believed to be a general protein degrading machinery.</text>
</comment>
<comment type="catalytic activity">
    <reaction evidence="1">
        <text>ATP-dependent cleavage of peptide bonds with broad specificity.</text>
        <dbReference type="EC" id="3.4.25.2"/>
    </reaction>
</comment>
<comment type="activity regulation">
    <text evidence="1">Allosterically activated by HslU binding.</text>
</comment>
<comment type="subunit">
    <text evidence="1">A double ring-shaped homohexamer of HslV is capped on each side by a ring-shaped HslU homohexamer. The assembly of the HslU/HslV complex is dependent on binding of ATP.</text>
</comment>
<comment type="subcellular location">
    <subcellularLocation>
        <location evidence="1">Cytoplasm</location>
    </subcellularLocation>
</comment>
<comment type="similarity">
    <text evidence="1">Belongs to the peptidase T1B family. HslV subfamily.</text>
</comment>